<protein>
    <recommendedName>
        <fullName>Probable endonuclease lcl3</fullName>
        <ecNumber>3.1.-.-</ecNumber>
    </recommendedName>
</protein>
<dbReference type="EC" id="3.1.-.-"/>
<dbReference type="EMBL" id="AAHF01000007">
    <property type="protein sequence ID" value="EAL88055.1"/>
    <property type="molecule type" value="Genomic_DNA"/>
</dbReference>
<dbReference type="RefSeq" id="XP_750093.1">
    <property type="nucleotide sequence ID" value="XM_745000.1"/>
</dbReference>
<dbReference type="SMR" id="Q4WK77"/>
<dbReference type="FunCoup" id="Q4WK77">
    <property type="interactions" value="14"/>
</dbReference>
<dbReference type="EnsemblFungi" id="EAL88055">
    <property type="protein sequence ID" value="EAL88055"/>
    <property type="gene ID" value="AFUA_1G03430"/>
</dbReference>
<dbReference type="GeneID" id="3507856"/>
<dbReference type="KEGG" id="afm:AFUA_1G03430"/>
<dbReference type="VEuPathDB" id="FungiDB:Afu1g03430"/>
<dbReference type="eggNOG" id="ENOG502S1U4">
    <property type="taxonomic scope" value="Eukaryota"/>
</dbReference>
<dbReference type="HOGENOM" id="CLU_046484_0_1_1"/>
<dbReference type="InParanoid" id="Q4WK77"/>
<dbReference type="OMA" id="IYHTPGG"/>
<dbReference type="OrthoDB" id="430293at2759"/>
<dbReference type="Proteomes" id="UP000002530">
    <property type="component" value="Chromosome 1"/>
</dbReference>
<dbReference type="GO" id="GO:0016020">
    <property type="term" value="C:membrane"/>
    <property type="evidence" value="ECO:0007669"/>
    <property type="project" value="UniProtKB-SubCell"/>
</dbReference>
<dbReference type="GO" id="GO:0005739">
    <property type="term" value="C:mitochondrion"/>
    <property type="evidence" value="ECO:0007669"/>
    <property type="project" value="UniProtKB-SubCell"/>
</dbReference>
<dbReference type="GO" id="GO:0004519">
    <property type="term" value="F:endonuclease activity"/>
    <property type="evidence" value="ECO:0007669"/>
    <property type="project" value="UniProtKB-KW"/>
</dbReference>
<dbReference type="GO" id="GO:0046872">
    <property type="term" value="F:metal ion binding"/>
    <property type="evidence" value="ECO:0007669"/>
    <property type="project" value="UniProtKB-KW"/>
</dbReference>
<dbReference type="FunFam" id="2.40.50.90:FF:000029">
    <property type="entry name" value="Probable endonuclease lcl3"/>
    <property type="match status" value="1"/>
</dbReference>
<dbReference type="Gene3D" id="2.40.50.90">
    <property type="match status" value="1"/>
</dbReference>
<dbReference type="InterPro" id="IPR035437">
    <property type="entry name" value="SNase_OB-fold_sf"/>
</dbReference>
<dbReference type="InterPro" id="IPR016071">
    <property type="entry name" value="Staphylococal_nuclease_OB-fold"/>
</dbReference>
<dbReference type="PANTHER" id="PTHR12302">
    <property type="entry name" value="EBNA2 BINDING PROTEIN P100"/>
    <property type="match status" value="1"/>
</dbReference>
<dbReference type="PANTHER" id="PTHR12302:SF3">
    <property type="entry name" value="SERINE_THREONINE-PROTEIN KINASE 31"/>
    <property type="match status" value="1"/>
</dbReference>
<dbReference type="Pfam" id="PF00565">
    <property type="entry name" value="SNase"/>
    <property type="match status" value="1"/>
</dbReference>
<dbReference type="SMART" id="SM00318">
    <property type="entry name" value="SNc"/>
    <property type="match status" value="1"/>
</dbReference>
<dbReference type="SUPFAM" id="SSF50199">
    <property type="entry name" value="Staphylococcal nuclease"/>
    <property type="match status" value="1"/>
</dbReference>
<dbReference type="PROSITE" id="PS50830">
    <property type="entry name" value="TNASE_3"/>
    <property type="match status" value="1"/>
</dbReference>
<sequence>MRWPPWASDTQAQQQSRKSSSEDDERQAAASSTTTSKKKDWESSVTAIDWAAFTEARTIIPTLILTSGFLGAFYIHRRYLRRFPDAVSITPSYFRRRSLLGQVTSVGDGDNFRIYHTPGGRLAGWGWLPWKKIPTSKKELRDKTVHIRLAGIDAPELAHFGRPEQPFAREAHQWLTSYLFGRRVRAYIHRPDQYQRAVASVYVRRLLDFPPFRRRDVSYEMLKRGLATVYEAKIGAEFGGEAMERKYKKAEWWAKLRGVGLWKDYRRNKTKWESPREYKTRMGLEEAAQPGVEIKK</sequence>
<reference key="1">
    <citation type="journal article" date="2005" name="Nature">
        <title>Genomic sequence of the pathogenic and allergenic filamentous fungus Aspergillus fumigatus.</title>
        <authorList>
            <person name="Nierman W.C."/>
            <person name="Pain A."/>
            <person name="Anderson M.J."/>
            <person name="Wortman J.R."/>
            <person name="Kim H.S."/>
            <person name="Arroyo J."/>
            <person name="Berriman M."/>
            <person name="Abe K."/>
            <person name="Archer D.B."/>
            <person name="Bermejo C."/>
            <person name="Bennett J.W."/>
            <person name="Bowyer P."/>
            <person name="Chen D."/>
            <person name="Collins M."/>
            <person name="Coulsen R."/>
            <person name="Davies R."/>
            <person name="Dyer P.S."/>
            <person name="Farman M.L."/>
            <person name="Fedorova N."/>
            <person name="Fedorova N.D."/>
            <person name="Feldblyum T.V."/>
            <person name="Fischer R."/>
            <person name="Fosker N."/>
            <person name="Fraser A."/>
            <person name="Garcia J.L."/>
            <person name="Garcia M.J."/>
            <person name="Goble A."/>
            <person name="Goldman G.H."/>
            <person name="Gomi K."/>
            <person name="Griffith-Jones S."/>
            <person name="Gwilliam R."/>
            <person name="Haas B.J."/>
            <person name="Haas H."/>
            <person name="Harris D.E."/>
            <person name="Horiuchi H."/>
            <person name="Huang J."/>
            <person name="Humphray S."/>
            <person name="Jimenez J."/>
            <person name="Keller N."/>
            <person name="Khouri H."/>
            <person name="Kitamoto K."/>
            <person name="Kobayashi T."/>
            <person name="Konzack S."/>
            <person name="Kulkarni R."/>
            <person name="Kumagai T."/>
            <person name="Lafton A."/>
            <person name="Latge J.-P."/>
            <person name="Li W."/>
            <person name="Lord A."/>
            <person name="Lu C."/>
            <person name="Majoros W.H."/>
            <person name="May G.S."/>
            <person name="Miller B.L."/>
            <person name="Mohamoud Y."/>
            <person name="Molina M."/>
            <person name="Monod M."/>
            <person name="Mouyna I."/>
            <person name="Mulligan S."/>
            <person name="Murphy L.D."/>
            <person name="O'Neil S."/>
            <person name="Paulsen I."/>
            <person name="Penalva M.A."/>
            <person name="Pertea M."/>
            <person name="Price C."/>
            <person name="Pritchard B.L."/>
            <person name="Quail M.A."/>
            <person name="Rabbinowitsch E."/>
            <person name="Rawlins N."/>
            <person name="Rajandream M.A."/>
            <person name="Reichard U."/>
            <person name="Renauld H."/>
            <person name="Robson G.D."/>
            <person name="Rodriguez de Cordoba S."/>
            <person name="Rodriguez-Pena J.M."/>
            <person name="Ronning C.M."/>
            <person name="Rutter S."/>
            <person name="Salzberg S.L."/>
            <person name="Sanchez M."/>
            <person name="Sanchez-Ferrero J.C."/>
            <person name="Saunders D."/>
            <person name="Seeger K."/>
            <person name="Squares R."/>
            <person name="Squares S."/>
            <person name="Takeuchi M."/>
            <person name="Tekaia F."/>
            <person name="Turner G."/>
            <person name="Vazquez de Aldana C.R."/>
            <person name="Weidman J."/>
            <person name="White O."/>
            <person name="Woodward J.R."/>
            <person name="Yu J.-H."/>
            <person name="Fraser C.M."/>
            <person name="Galagan J.E."/>
            <person name="Asai K."/>
            <person name="Machida M."/>
            <person name="Hall N."/>
            <person name="Barrell B.G."/>
            <person name="Denning D.W."/>
        </authorList>
    </citation>
    <scope>NUCLEOTIDE SEQUENCE [LARGE SCALE GENOMIC DNA]</scope>
    <source>
        <strain>ATCC MYA-4609 / CBS 101355 / FGSC A1100 / Af293</strain>
    </source>
</reference>
<proteinExistence type="inferred from homology"/>
<gene>
    <name type="primary">lcl3</name>
    <name type="ORF">AFUA_1G03430</name>
</gene>
<organism>
    <name type="scientific">Aspergillus fumigatus (strain ATCC MYA-4609 / CBS 101355 / FGSC A1100 / Af293)</name>
    <name type="common">Neosartorya fumigata</name>
    <dbReference type="NCBI Taxonomy" id="330879"/>
    <lineage>
        <taxon>Eukaryota</taxon>
        <taxon>Fungi</taxon>
        <taxon>Dikarya</taxon>
        <taxon>Ascomycota</taxon>
        <taxon>Pezizomycotina</taxon>
        <taxon>Eurotiomycetes</taxon>
        <taxon>Eurotiomycetidae</taxon>
        <taxon>Eurotiales</taxon>
        <taxon>Aspergillaceae</taxon>
        <taxon>Aspergillus</taxon>
        <taxon>Aspergillus subgen. Fumigati</taxon>
    </lineage>
</organism>
<comment type="subcellular location">
    <subcellularLocation>
        <location>Mitochondrion</location>
    </subcellularLocation>
    <subcellularLocation>
        <location evidence="1">Membrane</location>
        <topology evidence="1">Single-pass membrane protein</topology>
    </subcellularLocation>
</comment>
<comment type="similarity">
    <text evidence="5">Belongs to the LCL3 family.</text>
</comment>
<keyword id="KW-0106">Calcium</keyword>
<keyword id="KW-0255">Endonuclease</keyword>
<keyword id="KW-0378">Hydrolase</keyword>
<keyword id="KW-0472">Membrane</keyword>
<keyword id="KW-0479">Metal-binding</keyword>
<keyword id="KW-0496">Mitochondrion</keyword>
<keyword id="KW-0540">Nuclease</keyword>
<keyword id="KW-1185">Reference proteome</keyword>
<keyword id="KW-0812">Transmembrane</keyword>
<keyword id="KW-1133">Transmembrane helix</keyword>
<feature type="chain" id="PRO_0000408645" description="Probable endonuclease lcl3">
    <location>
        <begin position="1"/>
        <end position="296"/>
    </location>
</feature>
<feature type="transmembrane region" description="Helical" evidence="2">
    <location>
        <begin position="59"/>
        <end position="75"/>
    </location>
</feature>
<feature type="domain" description="TNase-like" evidence="3">
    <location>
        <begin position="97"/>
        <end position="264"/>
    </location>
</feature>
<feature type="region of interest" description="Disordered" evidence="4">
    <location>
        <begin position="1"/>
        <end position="36"/>
    </location>
</feature>
<feature type="compositionally biased region" description="Polar residues" evidence="4">
    <location>
        <begin position="8"/>
        <end position="18"/>
    </location>
</feature>
<feature type="active site" evidence="3">
    <location>
        <position position="148"/>
    </location>
</feature>
<feature type="active site" evidence="3">
    <location>
        <position position="156"/>
    </location>
</feature>
<feature type="active site" evidence="3">
    <location>
        <position position="196"/>
    </location>
</feature>
<feature type="binding site" evidence="3">
    <location>
        <position position="153"/>
    </location>
    <ligand>
        <name>Ca(2+)</name>
        <dbReference type="ChEBI" id="CHEBI:29108"/>
    </ligand>
</feature>
<accession>Q4WK77</accession>
<name>LCL3_ASPFU</name>
<evidence type="ECO:0000250" key="1"/>
<evidence type="ECO:0000255" key="2"/>
<evidence type="ECO:0000255" key="3">
    <source>
        <dbReference type="PROSITE-ProRule" id="PRU00272"/>
    </source>
</evidence>
<evidence type="ECO:0000256" key="4">
    <source>
        <dbReference type="SAM" id="MobiDB-lite"/>
    </source>
</evidence>
<evidence type="ECO:0000305" key="5"/>